<sequence>MLLSVLLQAAAAGVGLSKLGAALGAGLAVIGAGIGIGKIGGSAMEGIARQPEASGDIRMNMIIAAALVEGVALLALVVCLLVLFL</sequence>
<dbReference type="EMBL" id="AP006841">
    <property type="protein sequence ID" value="BAD48922.1"/>
    <property type="molecule type" value="Genomic_DNA"/>
</dbReference>
<dbReference type="RefSeq" id="WP_005777530.1">
    <property type="nucleotide sequence ID" value="NZ_UYXF01000015.1"/>
</dbReference>
<dbReference type="RefSeq" id="YP_099456.1">
    <property type="nucleotide sequence ID" value="NC_006347.1"/>
</dbReference>
<dbReference type="SMR" id="Q64UA7"/>
<dbReference type="STRING" id="295405.BF2175"/>
<dbReference type="GeneID" id="93103551"/>
<dbReference type="KEGG" id="bfr:BF2175"/>
<dbReference type="PATRIC" id="fig|295405.11.peg.2112"/>
<dbReference type="HOGENOM" id="CLU_148047_5_1_10"/>
<dbReference type="Proteomes" id="UP000002197">
    <property type="component" value="Chromosome"/>
</dbReference>
<dbReference type="GO" id="GO:0005886">
    <property type="term" value="C:plasma membrane"/>
    <property type="evidence" value="ECO:0007669"/>
    <property type="project" value="UniProtKB-SubCell"/>
</dbReference>
<dbReference type="GO" id="GO:0045259">
    <property type="term" value="C:proton-transporting ATP synthase complex"/>
    <property type="evidence" value="ECO:0007669"/>
    <property type="project" value="UniProtKB-KW"/>
</dbReference>
<dbReference type="GO" id="GO:0033177">
    <property type="term" value="C:proton-transporting two-sector ATPase complex, proton-transporting domain"/>
    <property type="evidence" value="ECO:0007669"/>
    <property type="project" value="InterPro"/>
</dbReference>
<dbReference type="GO" id="GO:0008289">
    <property type="term" value="F:lipid binding"/>
    <property type="evidence" value="ECO:0007669"/>
    <property type="project" value="UniProtKB-KW"/>
</dbReference>
<dbReference type="GO" id="GO:0046933">
    <property type="term" value="F:proton-transporting ATP synthase activity, rotational mechanism"/>
    <property type="evidence" value="ECO:0007669"/>
    <property type="project" value="UniProtKB-UniRule"/>
</dbReference>
<dbReference type="FunFam" id="1.20.20.10:FF:000004">
    <property type="entry name" value="ATP synthase subunit c"/>
    <property type="match status" value="1"/>
</dbReference>
<dbReference type="Gene3D" id="1.20.20.10">
    <property type="entry name" value="F1F0 ATP synthase subunit C"/>
    <property type="match status" value="1"/>
</dbReference>
<dbReference type="HAMAP" id="MF_01396">
    <property type="entry name" value="ATP_synth_c_bact"/>
    <property type="match status" value="1"/>
</dbReference>
<dbReference type="InterPro" id="IPR005953">
    <property type="entry name" value="ATP_synth_csu_bac/chlpt"/>
</dbReference>
<dbReference type="InterPro" id="IPR000454">
    <property type="entry name" value="ATP_synth_F0_csu"/>
</dbReference>
<dbReference type="InterPro" id="IPR020537">
    <property type="entry name" value="ATP_synth_F0_csu_DDCD_BS"/>
</dbReference>
<dbReference type="InterPro" id="IPR038662">
    <property type="entry name" value="ATP_synth_F0_csu_sf"/>
</dbReference>
<dbReference type="InterPro" id="IPR002379">
    <property type="entry name" value="ATPase_proteolipid_c-like_dom"/>
</dbReference>
<dbReference type="InterPro" id="IPR035921">
    <property type="entry name" value="F/V-ATP_Csub_sf"/>
</dbReference>
<dbReference type="NCBIfam" id="TIGR01260">
    <property type="entry name" value="ATP_synt_c"/>
    <property type="match status" value="1"/>
</dbReference>
<dbReference type="PANTHER" id="PTHR10031">
    <property type="entry name" value="ATP SYNTHASE LIPID-BINDING PROTEIN, MITOCHONDRIAL"/>
    <property type="match status" value="1"/>
</dbReference>
<dbReference type="PANTHER" id="PTHR10031:SF0">
    <property type="entry name" value="ATPASE PROTEIN 9"/>
    <property type="match status" value="1"/>
</dbReference>
<dbReference type="Pfam" id="PF00137">
    <property type="entry name" value="ATP-synt_C"/>
    <property type="match status" value="1"/>
</dbReference>
<dbReference type="PRINTS" id="PR00124">
    <property type="entry name" value="ATPASEC"/>
</dbReference>
<dbReference type="SUPFAM" id="SSF81333">
    <property type="entry name" value="F1F0 ATP synthase subunit C"/>
    <property type="match status" value="1"/>
</dbReference>
<dbReference type="PROSITE" id="PS00605">
    <property type="entry name" value="ATPASE_C"/>
    <property type="match status" value="1"/>
</dbReference>
<evidence type="ECO:0000255" key="1">
    <source>
        <dbReference type="HAMAP-Rule" id="MF_01396"/>
    </source>
</evidence>
<feature type="chain" id="PRO_0000365852" description="ATP synthase subunit c">
    <location>
        <begin position="1"/>
        <end position="85"/>
    </location>
</feature>
<feature type="transmembrane region" description="Helical" evidence="1">
    <location>
        <begin position="19"/>
        <end position="39"/>
    </location>
</feature>
<feature type="transmembrane region" description="Helical" evidence="1">
    <location>
        <begin position="62"/>
        <end position="82"/>
    </location>
</feature>
<feature type="site" description="Reversibly protonated during proton transport" evidence="1">
    <location>
        <position position="69"/>
    </location>
</feature>
<protein>
    <recommendedName>
        <fullName evidence="1">ATP synthase subunit c</fullName>
    </recommendedName>
    <alternativeName>
        <fullName evidence="1">ATP synthase F(0) sector subunit c</fullName>
    </alternativeName>
    <alternativeName>
        <fullName evidence="1">F-type ATPase subunit c</fullName>
        <shortName evidence="1">F-ATPase subunit c</shortName>
    </alternativeName>
    <alternativeName>
        <fullName evidence="1">Lipid-binding protein</fullName>
    </alternativeName>
</protein>
<organism>
    <name type="scientific">Bacteroides fragilis (strain YCH46)</name>
    <dbReference type="NCBI Taxonomy" id="295405"/>
    <lineage>
        <taxon>Bacteria</taxon>
        <taxon>Pseudomonadati</taxon>
        <taxon>Bacteroidota</taxon>
        <taxon>Bacteroidia</taxon>
        <taxon>Bacteroidales</taxon>
        <taxon>Bacteroidaceae</taxon>
        <taxon>Bacteroides</taxon>
    </lineage>
</organism>
<name>ATPL_BACFR</name>
<proteinExistence type="inferred from homology"/>
<accession>Q64UA7</accession>
<gene>
    <name evidence="1" type="primary">atpE</name>
    <name type="ordered locus">BF2175</name>
</gene>
<comment type="function">
    <text evidence="1">F(1)F(0) ATP synthase produces ATP from ADP in the presence of a proton or sodium gradient. F-type ATPases consist of two structural domains, F(1) containing the extramembraneous catalytic core and F(0) containing the membrane proton channel, linked together by a central stalk and a peripheral stalk. During catalysis, ATP synthesis in the catalytic domain of F(1) is coupled via a rotary mechanism of the central stalk subunits to proton translocation.</text>
</comment>
<comment type="function">
    <text evidence="1">Key component of the F(0) channel; it plays a direct role in translocation across the membrane. A homomeric c-ring of between 10-14 subunits forms the central stalk rotor element with the F(1) delta and epsilon subunits.</text>
</comment>
<comment type="subunit">
    <text evidence="1">F-type ATPases have 2 components, F(1) - the catalytic core - and F(0) - the membrane proton channel. F(1) has five subunits: alpha(3), beta(3), gamma(1), delta(1), epsilon(1). F(0) has three main subunits: a(1), b(2) and c(10-14). The alpha and beta chains form an alternating ring which encloses part of the gamma chain. F(1) is attached to F(0) by a central stalk formed by the gamma and epsilon chains, while a peripheral stalk is formed by the delta and b chains.</text>
</comment>
<comment type="subcellular location">
    <subcellularLocation>
        <location evidence="1">Cell inner membrane</location>
        <topology evidence="1">Multi-pass membrane protein</topology>
    </subcellularLocation>
</comment>
<comment type="similarity">
    <text evidence="1">Belongs to the ATPase C chain family.</text>
</comment>
<reference key="1">
    <citation type="journal article" date="2004" name="Proc. Natl. Acad. Sci. U.S.A.">
        <title>Genomic analysis of Bacteroides fragilis reveals extensive DNA inversions regulating cell surface adaptation.</title>
        <authorList>
            <person name="Kuwahara T."/>
            <person name="Yamashita A."/>
            <person name="Hirakawa H."/>
            <person name="Nakayama H."/>
            <person name="Toh H."/>
            <person name="Okada N."/>
            <person name="Kuhara S."/>
            <person name="Hattori M."/>
            <person name="Hayashi T."/>
            <person name="Ohnishi Y."/>
        </authorList>
    </citation>
    <scope>NUCLEOTIDE SEQUENCE [LARGE SCALE GENOMIC DNA]</scope>
    <source>
        <strain>YCH46</strain>
    </source>
</reference>
<keyword id="KW-0066">ATP synthesis</keyword>
<keyword id="KW-0997">Cell inner membrane</keyword>
<keyword id="KW-1003">Cell membrane</keyword>
<keyword id="KW-0138">CF(0)</keyword>
<keyword id="KW-0375">Hydrogen ion transport</keyword>
<keyword id="KW-0406">Ion transport</keyword>
<keyword id="KW-0446">Lipid-binding</keyword>
<keyword id="KW-0472">Membrane</keyword>
<keyword id="KW-0812">Transmembrane</keyword>
<keyword id="KW-1133">Transmembrane helix</keyword>
<keyword id="KW-0813">Transport</keyword>